<proteinExistence type="inferred from homology"/>
<keyword id="KW-0963">Cytoplasm</keyword>
<keyword id="KW-0489">Methyltransferase</keyword>
<keyword id="KW-0698">rRNA processing</keyword>
<keyword id="KW-0949">S-adenosyl-L-methionine</keyword>
<keyword id="KW-0808">Transferase</keyword>
<organism>
    <name type="scientific">Yersinia pseudotuberculosis serotype IB (strain PB1/+)</name>
    <dbReference type="NCBI Taxonomy" id="502801"/>
    <lineage>
        <taxon>Bacteria</taxon>
        <taxon>Pseudomonadati</taxon>
        <taxon>Pseudomonadota</taxon>
        <taxon>Gammaproteobacteria</taxon>
        <taxon>Enterobacterales</taxon>
        <taxon>Yersiniaceae</taxon>
        <taxon>Yersinia</taxon>
    </lineage>
</organism>
<reference key="1">
    <citation type="submission" date="2008-04" db="EMBL/GenBank/DDBJ databases">
        <title>Complete sequence of Yersinia pseudotuberculosis PB1/+.</title>
        <authorList>
            <person name="Copeland A."/>
            <person name="Lucas S."/>
            <person name="Lapidus A."/>
            <person name="Glavina del Rio T."/>
            <person name="Dalin E."/>
            <person name="Tice H."/>
            <person name="Bruce D."/>
            <person name="Goodwin L."/>
            <person name="Pitluck S."/>
            <person name="Munk A.C."/>
            <person name="Brettin T."/>
            <person name="Detter J.C."/>
            <person name="Han C."/>
            <person name="Tapia R."/>
            <person name="Schmutz J."/>
            <person name="Larimer F."/>
            <person name="Land M."/>
            <person name="Hauser L."/>
            <person name="Challacombe J.F."/>
            <person name="Green L."/>
            <person name="Lindler L.E."/>
            <person name="Nikolich M.P."/>
            <person name="Richardson P."/>
        </authorList>
    </citation>
    <scope>NUCLEOTIDE SEQUENCE [LARGE SCALE GENOMIC DNA]</scope>
    <source>
        <strain>PB1/+</strain>
    </source>
</reference>
<comment type="function">
    <text evidence="1">Specifically methylates the guanine in position 1207 of 16S rRNA in the 30S particle.</text>
</comment>
<comment type="catalytic activity">
    <reaction evidence="1">
        <text>guanosine(1207) in 16S rRNA + S-adenosyl-L-methionine = N(2)-methylguanosine(1207) in 16S rRNA + S-adenosyl-L-homocysteine + H(+)</text>
        <dbReference type="Rhea" id="RHEA:42736"/>
        <dbReference type="Rhea" id="RHEA-COMP:10213"/>
        <dbReference type="Rhea" id="RHEA-COMP:10214"/>
        <dbReference type="ChEBI" id="CHEBI:15378"/>
        <dbReference type="ChEBI" id="CHEBI:57856"/>
        <dbReference type="ChEBI" id="CHEBI:59789"/>
        <dbReference type="ChEBI" id="CHEBI:74269"/>
        <dbReference type="ChEBI" id="CHEBI:74481"/>
        <dbReference type="EC" id="2.1.1.172"/>
    </reaction>
</comment>
<comment type="subunit">
    <text evidence="1">Monomer.</text>
</comment>
<comment type="subcellular location">
    <subcellularLocation>
        <location evidence="1">Cytoplasm</location>
    </subcellularLocation>
</comment>
<comment type="similarity">
    <text evidence="1">Belongs to the methyltransferase superfamily. RsmC family.</text>
</comment>
<feature type="chain" id="PRO_0000369806" description="Ribosomal RNA small subunit methyltransferase C">
    <location>
        <begin position="1"/>
        <end position="347"/>
    </location>
</feature>
<gene>
    <name evidence="1" type="primary">rsmC</name>
    <name type="ordered locus">YPTS_0594</name>
</gene>
<dbReference type="EC" id="2.1.1.172" evidence="1"/>
<dbReference type="EMBL" id="CP001048">
    <property type="protein sequence ID" value="ACC87578.1"/>
    <property type="molecule type" value="Genomic_DNA"/>
</dbReference>
<dbReference type="RefSeq" id="WP_011191679.1">
    <property type="nucleotide sequence ID" value="NZ_CP009780.1"/>
</dbReference>
<dbReference type="SMR" id="B2K3H9"/>
<dbReference type="KEGG" id="ypb:YPTS_0594"/>
<dbReference type="PATRIC" id="fig|502801.10.peg.4272"/>
<dbReference type="GO" id="GO:0005737">
    <property type="term" value="C:cytoplasm"/>
    <property type="evidence" value="ECO:0007669"/>
    <property type="project" value="UniProtKB-SubCell"/>
</dbReference>
<dbReference type="GO" id="GO:0052914">
    <property type="term" value="F:16S rRNA (guanine(1207)-N(2))-methyltransferase activity"/>
    <property type="evidence" value="ECO:0007669"/>
    <property type="project" value="UniProtKB-EC"/>
</dbReference>
<dbReference type="GO" id="GO:0003676">
    <property type="term" value="F:nucleic acid binding"/>
    <property type="evidence" value="ECO:0007669"/>
    <property type="project" value="InterPro"/>
</dbReference>
<dbReference type="CDD" id="cd02440">
    <property type="entry name" value="AdoMet_MTases"/>
    <property type="match status" value="1"/>
</dbReference>
<dbReference type="Gene3D" id="3.40.50.150">
    <property type="entry name" value="Vaccinia Virus protein VP39"/>
    <property type="match status" value="2"/>
</dbReference>
<dbReference type="HAMAP" id="MF_01862">
    <property type="entry name" value="16SrRNA_methyltr_C"/>
    <property type="match status" value="1"/>
</dbReference>
<dbReference type="InterPro" id="IPR002052">
    <property type="entry name" value="DNA_methylase_N6_adenine_CS"/>
</dbReference>
<dbReference type="InterPro" id="IPR013675">
    <property type="entry name" value="Mtase_sm_N"/>
</dbReference>
<dbReference type="InterPro" id="IPR023543">
    <property type="entry name" value="rRNA_ssu_MeTfrase_C"/>
</dbReference>
<dbReference type="InterPro" id="IPR046977">
    <property type="entry name" value="RsmC/RlmG"/>
</dbReference>
<dbReference type="InterPro" id="IPR029063">
    <property type="entry name" value="SAM-dependent_MTases_sf"/>
</dbReference>
<dbReference type="InterPro" id="IPR007848">
    <property type="entry name" value="Small_mtfrase_dom"/>
</dbReference>
<dbReference type="NCBIfam" id="NF007023">
    <property type="entry name" value="PRK09489.1"/>
    <property type="match status" value="1"/>
</dbReference>
<dbReference type="PANTHER" id="PTHR47816">
    <property type="entry name" value="RIBOSOMAL RNA SMALL SUBUNIT METHYLTRANSFERASE C"/>
    <property type="match status" value="1"/>
</dbReference>
<dbReference type="PANTHER" id="PTHR47816:SF4">
    <property type="entry name" value="RIBOSOMAL RNA SMALL SUBUNIT METHYLTRANSFERASE C"/>
    <property type="match status" value="1"/>
</dbReference>
<dbReference type="Pfam" id="PF05175">
    <property type="entry name" value="MTS"/>
    <property type="match status" value="1"/>
</dbReference>
<dbReference type="Pfam" id="PF08468">
    <property type="entry name" value="MTS_N"/>
    <property type="match status" value="1"/>
</dbReference>
<dbReference type="SUPFAM" id="SSF53335">
    <property type="entry name" value="S-adenosyl-L-methionine-dependent methyltransferases"/>
    <property type="match status" value="1"/>
</dbReference>
<name>RSMC_YERPB</name>
<protein>
    <recommendedName>
        <fullName evidence="1">Ribosomal RNA small subunit methyltransferase C</fullName>
        <ecNumber evidence="1">2.1.1.172</ecNumber>
    </recommendedName>
    <alternativeName>
        <fullName evidence="1">16S rRNA m2G1207 methyltransferase</fullName>
    </alternativeName>
    <alternativeName>
        <fullName evidence="1">rRNA (guanine-N(2)-)-methyltransferase RsmC</fullName>
    </alternativeName>
</protein>
<evidence type="ECO:0000255" key="1">
    <source>
        <dbReference type="HAMAP-Rule" id="MF_01862"/>
    </source>
</evidence>
<sequence>MSALTPASEVILRHSDEFIARHVLFAGDLQDALPAQFDAAGVRVHTNQYHHWQLLSNTLEENVQFGLLATAETLAACDTLIYYWPKSKQEAQFQLANLLSILPVGTDIFVVGENRSGVRSAEEMLADFAQLAKIDSARRCGLYHGRLDKQPEFDADAWWESYQVGSVTVKTLPGVFSRDSLDSGSHLLLSTFNEPFKGSVLDVGCGAGVLASVLAQQSPKIKWTLSDVSAAAIEASRATLAVNNIEAQVIASNVYSDIKGRFEMIISNPPFHDGIQTSLTAAEMLIRGATAHLHVGGKLRIVANSFLPYPALLDAAFGSHEVLAQNGRFKVYQATVGRPPRDPKKKR</sequence>
<accession>B2K3H9</accession>